<keyword id="KW-0159">Chromosome partition</keyword>
<keyword id="KW-1185">Reference proteome</keyword>
<gene>
    <name evidence="3" type="primary">AEL2</name>
    <name evidence="5" type="ordered locus">At3g09380</name>
    <name evidence="6" type="ORF">F3L24.26</name>
</gene>
<name>AEL2_ARATH</name>
<accession>Q9SR25</accession>
<accession>F4IZX5</accession>
<feature type="chain" id="PRO_0000212697" description="Protein AE7-like 2">
    <location>
        <begin position="1"/>
        <end position="149"/>
    </location>
</feature>
<sequence>MDSVLTNKNPIIYPKRTRRYRTDQSSTDEFSSTNRIRDIKDPEHPELSLEDLNVLTEESVEVDDHKSYVRITFTPTLPHCHLPTHIGLCILVKLVQSLPARFKVDVRVAPGSHDKETTVNKQLGDKERVTAALENPELVALLNKMMQVC</sequence>
<evidence type="ECO:0000250" key="1">
    <source>
        <dbReference type="UniProtKB" id="Q9D187"/>
    </source>
</evidence>
<evidence type="ECO:0000269" key="2">
    <source>
    </source>
</evidence>
<evidence type="ECO:0000303" key="3">
    <source>
    </source>
</evidence>
<evidence type="ECO:0000305" key="4"/>
<evidence type="ECO:0000312" key="5">
    <source>
        <dbReference type="Araport" id="AT3G09380"/>
    </source>
</evidence>
<evidence type="ECO:0000312" key="6">
    <source>
        <dbReference type="EMBL" id="AAF14033.1"/>
    </source>
</evidence>
<protein>
    <recommendedName>
        <fullName evidence="3">Protein AE7-like 2</fullName>
    </recommendedName>
    <alternativeName>
        <fullName evidence="4">MIP18 family protein At3g09380</fullName>
    </alternativeName>
</protein>
<comment type="function">
    <text evidence="1 2">May play a role in chromosome segregation through establishment of sister chromatid cohesion (By similarity). Unable to complement ae7 mutants, and thus probably not involved in the cytosolic iron-sulfur assembly (CIA) pathway (PubMed:23104832).</text>
</comment>
<comment type="similarity">
    <text evidence="4">Belongs to the MIP18 family.</text>
</comment>
<comment type="sequence caution" evidence="4">
    <conflict type="erroneous initiation">
        <sequence resource="EMBL-CDS" id="AAF14033"/>
    </conflict>
    <text>Extended N-terminus.</text>
</comment>
<proteinExistence type="evidence at transcript level"/>
<dbReference type="EMBL" id="AC011436">
    <property type="protein sequence ID" value="AAF14033.1"/>
    <property type="status" value="ALT_INIT"/>
    <property type="molecule type" value="Genomic_DNA"/>
</dbReference>
<dbReference type="EMBL" id="CP002686">
    <property type="protein sequence ID" value="AEE74759.2"/>
    <property type="molecule type" value="Genomic_DNA"/>
</dbReference>
<dbReference type="EMBL" id="EG498918">
    <property type="status" value="NOT_ANNOTATED_CDS"/>
    <property type="molecule type" value="mRNA"/>
</dbReference>
<dbReference type="RefSeq" id="NP_187549.2">
    <property type="nucleotide sequence ID" value="NM_111772.3"/>
</dbReference>
<dbReference type="SMR" id="Q9SR25"/>
<dbReference type="FunCoup" id="Q9SR25">
    <property type="interactions" value="2716"/>
</dbReference>
<dbReference type="STRING" id="3702.Q9SR25"/>
<dbReference type="PaxDb" id="3702-AT3G09380.1"/>
<dbReference type="EnsemblPlants" id="AT3G09380.1">
    <property type="protein sequence ID" value="AT3G09380.1"/>
    <property type="gene ID" value="AT3G09380"/>
</dbReference>
<dbReference type="GeneID" id="820096"/>
<dbReference type="Gramene" id="AT3G09380.1">
    <property type="protein sequence ID" value="AT3G09380.1"/>
    <property type="gene ID" value="AT3G09380"/>
</dbReference>
<dbReference type="KEGG" id="ath:AT3G09380"/>
<dbReference type="Araport" id="AT3G09380"/>
<dbReference type="TAIR" id="AT3G09380"/>
<dbReference type="eggNOG" id="KOG3381">
    <property type="taxonomic scope" value="Eukaryota"/>
</dbReference>
<dbReference type="HOGENOM" id="CLU_075876_3_1_1"/>
<dbReference type="InParanoid" id="Q9SR25"/>
<dbReference type="OMA" id="YPKKQGR"/>
<dbReference type="PhylomeDB" id="Q9SR25"/>
<dbReference type="PRO" id="PR:Q9SR25"/>
<dbReference type="Proteomes" id="UP000006548">
    <property type="component" value="Chromosome 3"/>
</dbReference>
<dbReference type="ExpressionAtlas" id="Q9SR25">
    <property type="expression patterns" value="baseline and differential"/>
</dbReference>
<dbReference type="GO" id="GO:0007059">
    <property type="term" value="P:chromosome segregation"/>
    <property type="evidence" value="ECO:0007669"/>
    <property type="project" value="UniProtKB-KW"/>
</dbReference>
<dbReference type="GO" id="GO:0051604">
    <property type="term" value="P:protein maturation"/>
    <property type="evidence" value="ECO:0007669"/>
    <property type="project" value="InterPro"/>
</dbReference>
<dbReference type="FunFam" id="3.30.300.130:FF:000005">
    <property type="entry name" value="Mitotic spindle-associated mmxd complex subunit"/>
    <property type="match status" value="1"/>
</dbReference>
<dbReference type="Gene3D" id="6.10.250.1280">
    <property type="match status" value="1"/>
</dbReference>
<dbReference type="Gene3D" id="3.30.300.130">
    <property type="entry name" value="Fe-S cluster assembly (FSCA)"/>
    <property type="match status" value="1"/>
</dbReference>
<dbReference type="InterPro" id="IPR034904">
    <property type="entry name" value="FSCA_dom_sf"/>
</dbReference>
<dbReference type="InterPro" id="IPR039796">
    <property type="entry name" value="MIP18"/>
</dbReference>
<dbReference type="InterPro" id="IPR002744">
    <property type="entry name" value="MIP18-like"/>
</dbReference>
<dbReference type="PANTHER" id="PTHR12377">
    <property type="entry name" value="CYTOSOLIC IRON-SULFUR ASSEMBLY COMPONENT 2B-RELATED"/>
    <property type="match status" value="1"/>
</dbReference>
<dbReference type="PANTHER" id="PTHR12377:SF7">
    <property type="entry name" value="PROTEIN AE7-LIKE 2"/>
    <property type="match status" value="1"/>
</dbReference>
<dbReference type="Pfam" id="PF01883">
    <property type="entry name" value="FeS_assembly_P"/>
    <property type="match status" value="1"/>
</dbReference>
<dbReference type="SUPFAM" id="SSF117916">
    <property type="entry name" value="Fe-S cluster assembly (FSCA) domain-like"/>
    <property type="match status" value="1"/>
</dbReference>
<organism>
    <name type="scientific">Arabidopsis thaliana</name>
    <name type="common">Mouse-ear cress</name>
    <dbReference type="NCBI Taxonomy" id="3702"/>
    <lineage>
        <taxon>Eukaryota</taxon>
        <taxon>Viridiplantae</taxon>
        <taxon>Streptophyta</taxon>
        <taxon>Embryophyta</taxon>
        <taxon>Tracheophyta</taxon>
        <taxon>Spermatophyta</taxon>
        <taxon>Magnoliopsida</taxon>
        <taxon>eudicotyledons</taxon>
        <taxon>Gunneridae</taxon>
        <taxon>Pentapetalae</taxon>
        <taxon>rosids</taxon>
        <taxon>malvids</taxon>
        <taxon>Brassicales</taxon>
        <taxon>Brassicaceae</taxon>
        <taxon>Camelineae</taxon>
        <taxon>Arabidopsis</taxon>
    </lineage>
</organism>
<reference key="1">
    <citation type="journal article" date="2000" name="Nature">
        <title>Sequence and analysis of chromosome 3 of the plant Arabidopsis thaliana.</title>
        <authorList>
            <person name="Salanoubat M."/>
            <person name="Lemcke K."/>
            <person name="Rieger M."/>
            <person name="Ansorge W."/>
            <person name="Unseld M."/>
            <person name="Fartmann B."/>
            <person name="Valle G."/>
            <person name="Bloecker H."/>
            <person name="Perez-Alonso M."/>
            <person name="Obermaier B."/>
            <person name="Delseny M."/>
            <person name="Boutry M."/>
            <person name="Grivell L.A."/>
            <person name="Mache R."/>
            <person name="Puigdomenech P."/>
            <person name="De Simone V."/>
            <person name="Choisne N."/>
            <person name="Artiguenave F."/>
            <person name="Robert C."/>
            <person name="Brottier P."/>
            <person name="Wincker P."/>
            <person name="Cattolico L."/>
            <person name="Weissenbach J."/>
            <person name="Saurin W."/>
            <person name="Quetier F."/>
            <person name="Schaefer M."/>
            <person name="Mueller-Auer S."/>
            <person name="Gabel C."/>
            <person name="Fuchs M."/>
            <person name="Benes V."/>
            <person name="Wurmbach E."/>
            <person name="Drzonek H."/>
            <person name="Erfle H."/>
            <person name="Jordan N."/>
            <person name="Bangert S."/>
            <person name="Wiedelmann R."/>
            <person name="Kranz H."/>
            <person name="Voss H."/>
            <person name="Holland R."/>
            <person name="Brandt P."/>
            <person name="Nyakatura G."/>
            <person name="Vezzi A."/>
            <person name="D'Angelo M."/>
            <person name="Pallavicini A."/>
            <person name="Toppo S."/>
            <person name="Simionati B."/>
            <person name="Conrad A."/>
            <person name="Hornischer K."/>
            <person name="Kauer G."/>
            <person name="Loehnert T.-H."/>
            <person name="Nordsiek G."/>
            <person name="Reichelt J."/>
            <person name="Scharfe M."/>
            <person name="Schoen O."/>
            <person name="Bargues M."/>
            <person name="Terol J."/>
            <person name="Climent J."/>
            <person name="Navarro P."/>
            <person name="Collado C."/>
            <person name="Perez-Perez A."/>
            <person name="Ottenwaelder B."/>
            <person name="Duchemin D."/>
            <person name="Cooke R."/>
            <person name="Laudie M."/>
            <person name="Berger-Llauro C."/>
            <person name="Purnelle B."/>
            <person name="Masuy D."/>
            <person name="de Haan M."/>
            <person name="Maarse A.C."/>
            <person name="Alcaraz J.-P."/>
            <person name="Cottet A."/>
            <person name="Casacuberta E."/>
            <person name="Monfort A."/>
            <person name="Argiriou A."/>
            <person name="Flores M."/>
            <person name="Liguori R."/>
            <person name="Vitale D."/>
            <person name="Mannhaupt G."/>
            <person name="Haase D."/>
            <person name="Schoof H."/>
            <person name="Rudd S."/>
            <person name="Zaccaria P."/>
            <person name="Mewes H.-W."/>
            <person name="Mayer K.F.X."/>
            <person name="Kaul S."/>
            <person name="Town C.D."/>
            <person name="Koo H.L."/>
            <person name="Tallon L.J."/>
            <person name="Jenkins J."/>
            <person name="Rooney T."/>
            <person name="Rizzo M."/>
            <person name="Walts A."/>
            <person name="Utterback T."/>
            <person name="Fujii C.Y."/>
            <person name="Shea T.P."/>
            <person name="Creasy T.H."/>
            <person name="Haas B."/>
            <person name="Maiti R."/>
            <person name="Wu D."/>
            <person name="Peterson J."/>
            <person name="Van Aken S."/>
            <person name="Pai G."/>
            <person name="Militscher J."/>
            <person name="Sellers P."/>
            <person name="Gill J.E."/>
            <person name="Feldblyum T.V."/>
            <person name="Preuss D."/>
            <person name="Lin X."/>
            <person name="Nierman W.C."/>
            <person name="Salzberg S.L."/>
            <person name="White O."/>
            <person name="Venter J.C."/>
            <person name="Fraser C.M."/>
            <person name="Kaneko T."/>
            <person name="Nakamura Y."/>
            <person name="Sato S."/>
            <person name="Kato T."/>
            <person name="Asamizu E."/>
            <person name="Sasamoto S."/>
            <person name="Kimura T."/>
            <person name="Idesawa K."/>
            <person name="Kawashima K."/>
            <person name="Kishida Y."/>
            <person name="Kiyokawa C."/>
            <person name="Kohara M."/>
            <person name="Matsumoto M."/>
            <person name="Matsuno A."/>
            <person name="Muraki A."/>
            <person name="Nakayama S."/>
            <person name="Nakazaki N."/>
            <person name="Shinpo S."/>
            <person name="Takeuchi C."/>
            <person name="Wada T."/>
            <person name="Watanabe A."/>
            <person name="Yamada M."/>
            <person name="Yasuda M."/>
            <person name="Tabata S."/>
        </authorList>
    </citation>
    <scope>NUCLEOTIDE SEQUENCE [LARGE SCALE GENOMIC DNA]</scope>
    <source>
        <strain>cv. Columbia</strain>
    </source>
</reference>
<reference key="2">
    <citation type="journal article" date="2017" name="Plant J.">
        <title>Araport11: a complete reannotation of the Arabidopsis thaliana reference genome.</title>
        <authorList>
            <person name="Cheng C.Y."/>
            <person name="Krishnakumar V."/>
            <person name="Chan A.P."/>
            <person name="Thibaud-Nissen F."/>
            <person name="Schobel S."/>
            <person name="Town C.D."/>
        </authorList>
    </citation>
    <scope>GENOME REANNOTATION</scope>
    <source>
        <strain>cv. Columbia</strain>
    </source>
</reference>
<reference key="3">
    <citation type="journal article" date="2005" name="Plant Physiol.">
        <title>Analysis of the cDNAs of hypothetical genes on Arabidopsis chromosome 2 reveals numerous transcript variants.</title>
        <authorList>
            <person name="Xiao Y.-L."/>
            <person name="Smith S.R."/>
            <person name="Ishmael N."/>
            <person name="Redman J.C."/>
            <person name="Kumar N."/>
            <person name="Monaghan E.L."/>
            <person name="Ayele M."/>
            <person name="Haas B.J."/>
            <person name="Wu H.C."/>
            <person name="Town C.D."/>
        </authorList>
    </citation>
    <scope>NUCLEOTIDE SEQUENCE [LARGE SCALE MRNA]</scope>
    <source>
        <strain>cv. Columbia</strain>
    </source>
</reference>
<reference key="4">
    <citation type="journal article" date="2012" name="Plant Cell">
        <title>The DUF59 family gene AE7 acts in the cytosolic iron-sulfur cluster assembly pathway to maintain nuclear genome integrity in Arabidopsis.</title>
        <authorList>
            <person name="Luo D."/>
            <person name="Bernard D.G."/>
            <person name="Balk J."/>
            <person name="Hai H."/>
            <person name="Cui X."/>
        </authorList>
    </citation>
    <scope>FUNCTION</scope>
    <scope>IDENTIFICATION</scope>
    <source>
        <strain>cv. Columbia</strain>
    </source>
</reference>